<evidence type="ECO:0000250" key="1"/>
<evidence type="ECO:0000250" key="2">
    <source>
        <dbReference type="UniProtKB" id="Q3E840"/>
    </source>
</evidence>
<evidence type="ECO:0000255" key="3">
    <source>
        <dbReference type="PROSITE-ProRule" id="PRU00456"/>
    </source>
</evidence>
<evidence type="ECO:0000305" key="4"/>
<proteinExistence type="inferred from homology"/>
<name>DPH3_ASPFU</name>
<organism>
    <name type="scientific">Aspergillus fumigatus (strain ATCC MYA-4609 / CBS 101355 / FGSC A1100 / Af293)</name>
    <name type="common">Neosartorya fumigata</name>
    <dbReference type="NCBI Taxonomy" id="330879"/>
    <lineage>
        <taxon>Eukaryota</taxon>
        <taxon>Fungi</taxon>
        <taxon>Dikarya</taxon>
        <taxon>Ascomycota</taxon>
        <taxon>Pezizomycotina</taxon>
        <taxon>Eurotiomycetes</taxon>
        <taxon>Eurotiomycetidae</taxon>
        <taxon>Eurotiales</taxon>
        <taxon>Aspergillaceae</taxon>
        <taxon>Aspergillus</taxon>
        <taxon>Aspergillus subgen. Fumigati</taxon>
    </lineage>
</organism>
<feature type="chain" id="PRO_0000082627" description="Diphthamide biosynthesis protein 3">
    <location>
        <begin position="1"/>
        <end position="106"/>
    </location>
</feature>
<feature type="domain" description="DPH-type MB" evidence="3">
    <location>
        <begin position="8"/>
        <end position="64"/>
    </location>
</feature>
<feature type="binding site" evidence="2">
    <location>
        <position position="30"/>
    </location>
    <ligand>
        <name>Fe cation</name>
        <dbReference type="ChEBI" id="CHEBI:24875"/>
    </ligand>
</feature>
<feature type="binding site" evidence="2">
    <location>
        <position position="32"/>
    </location>
    <ligand>
        <name>Fe cation</name>
        <dbReference type="ChEBI" id="CHEBI:24875"/>
    </ligand>
</feature>
<feature type="binding site" evidence="2">
    <location>
        <position position="52"/>
    </location>
    <ligand>
        <name>Fe cation</name>
        <dbReference type="ChEBI" id="CHEBI:24875"/>
    </ligand>
</feature>
<feature type="binding site" evidence="2">
    <location>
        <position position="55"/>
    </location>
    <ligand>
        <name>Fe cation</name>
        <dbReference type="ChEBI" id="CHEBI:24875"/>
    </ligand>
</feature>
<keyword id="KW-0963">Cytoplasm</keyword>
<keyword id="KW-0408">Iron</keyword>
<keyword id="KW-0479">Metal-binding</keyword>
<keyword id="KW-0539">Nucleus</keyword>
<keyword id="KW-0560">Oxidoreductase</keyword>
<keyword id="KW-1185">Reference proteome</keyword>
<protein>
    <recommendedName>
        <fullName>Diphthamide biosynthesis protein 3</fullName>
    </recommendedName>
</protein>
<sequence>MTDEALSIYDEIEIEDMIFDPNLQIYHYPCPCGDRFEIAIDDLRDGEDIAVCPSCSLMIRVIFEVVCSLPASTRSRIWDADNVPYLQSDLPKDGNQPAPGAVSVQA</sequence>
<gene>
    <name type="primary">dph3</name>
    <name type="ORF">AFUA_4G10520</name>
</gene>
<dbReference type="EMBL" id="AAHF01000005">
    <property type="protein sequence ID" value="EAL89736.1"/>
    <property type="molecule type" value="Genomic_DNA"/>
</dbReference>
<dbReference type="RefSeq" id="XP_751774.1">
    <property type="nucleotide sequence ID" value="XM_746681.1"/>
</dbReference>
<dbReference type="SMR" id="Q4WPU8"/>
<dbReference type="FunCoup" id="Q4WPU8">
    <property type="interactions" value="333"/>
</dbReference>
<dbReference type="STRING" id="330879.Q4WPU8"/>
<dbReference type="EnsemblFungi" id="EAL89736">
    <property type="protein sequence ID" value="EAL89736"/>
    <property type="gene ID" value="AFUA_4G10520"/>
</dbReference>
<dbReference type="GeneID" id="3509355"/>
<dbReference type="KEGG" id="afm:AFUA_4G10520"/>
<dbReference type="VEuPathDB" id="FungiDB:Afu4g10520"/>
<dbReference type="eggNOG" id="KOG2923">
    <property type="taxonomic scope" value="Eukaryota"/>
</dbReference>
<dbReference type="HOGENOM" id="CLU_155991_4_0_1"/>
<dbReference type="InParanoid" id="Q4WPU8"/>
<dbReference type="OMA" id="HMSEAKT"/>
<dbReference type="OrthoDB" id="66964at2759"/>
<dbReference type="UniPathway" id="UPA00559"/>
<dbReference type="Proteomes" id="UP000002530">
    <property type="component" value="Chromosome 4"/>
</dbReference>
<dbReference type="GO" id="GO:0005737">
    <property type="term" value="C:cytoplasm"/>
    <property type="evidence" value="ECO:0007669"/>
    <property type="project" value="UniProtKB-SubCell"/>
</dbReference>
<dbReference type="GO" id="GO:0005634">
    <property type="term" value="C:nucleus"/>
    <property type="evidence" value="ECO:0007669"/>
    <property type="project" value="UniProtKB-SubCell"/>
</dbReference>
<dbReference type="GO" id="GO:0008198">
    <property type="term" value="F:ferrous iron binding"/>
    <property type="evidence" value="ECO:0000250"/>
    <property type="project" value="UniProtKB"/>
</dbReference>
<dbReference type="GO" id="GO:0034986">
    <property type="term" value="F:iron chaperone activity"/>
    <property type="evidence" value="ECO:0000250"/>
    <property type="project" value="UniProtKB"/>
</dbReference>
<dbReference type="GO" id="GO:0016491">
    <property type="term" value="F:oxidoreductase activity"/>
    <property type="evidence" value="ECO:0007669"/>
    <property type="project" value="UniProtKB-KW"/>
</dbReference>
<dbReference type="GO" id="GO:0017183">
    <property type="term" value="P:protein histidyl modification to diphthamide"/>
    <property type="evidence" value="ECO:0000250"/>
    <property type="project" value="UniProtKB"/>
</dbReference>
<dbReference type="GO" id="GO:0002926">
    <property type="term" value="P:tRNA wobble base 5-methoxycarbonylmethyl-2-thiouridinylation"/>
    <property type="evidence" value="ECO:0000250"/>
    <property type="project" value="UniProtKB"/>
</dbReference>
<dbReference type="FunFam" id="3.10.660.10:FF:000001">
    <property type="entry name" value="Diphthamide biosynthesis 3"/>
    <property type="match status" value="1"/>
</dbReference>
<dbReference type="Gene3D" id="3.10.660.10">
    <property type="entry name" value="DPH Zinc finger"/>
    <property type="match status" value="1"/>
</dbReference>
<dbReference type="InterPro" id="IPR044248">
    <property type="entry name" value="DPH3/4-like"/>
</dbReference>
<dbReference type="InterPro" id="IPR007872">
    <property type="entry name" value="DPH_MB_dom"/>
</dbReference>
<dbReference type="InterPro" id="IPR036671">
    <property type="entry name" value="DPH_MB_sf"/>
</dbReference>
<dbReference type="PANTHER" id="PTHR21454:SF31">
    <property type="entry name" value="DIPHTHAMIDE BIOSYNTHESIS PROTEIN 3"/>
    <property type="match status" value="1"/>
</dbReference>
<dbReference type="PANTHER" id="PTHR21454">
    <property type="entry name" value="DPH3 HOMOLOG-RELATED"/>
    <property type="match status" value="1"/>
</dbReference>
<dbReference type="Pfam" id="PF05207">
    <property type="entry name" value="Zn_ribbon_CSL"/>
    <property type="match status" value="1"/>
</dbReference>
<dbReference type="SUPFAM" id="SSF144217">
    <property type="entry name" value="CSL zinc finger"/>
    <property type="match status" value="1"/>
</dbReference>
<dbReference type="PROSITE" id="PS51074">
    <property type="entry name" value="DPH_MB"/>
    <property type="match status" value="1"/>
</dbReference>
<accession>Q4WPU8</accession>
<comment type="function">
    <text evidence="2">Required for the first step of diphthamide biosynthesis, a post-translational modification of histidine which occurs in elongation factor 2. Dph1 and dph2 transfer a 3-amino-3-carboxypropyl (ACP) group from S-adenosyl-L-methionine (SAM) to a histidine residue, the reaction is assisted by a reduction system comprising dph3 and a NADH-dependent reductase, predominantly cbr1. Acts as an electron donor to reduce the Fe-S cluster in dph1-dph2 keeping the [4Fe-4S] clusters in the active and reduced state. Restores iron to dph1-dph2 iron-sulfur clusters which have degraded from [4Fe-4S] to [3Fe-4S] by donating an iron atom to reform [4Fe-4S] clusters, in a manner dependent on the presence of elongation factor 2 and SAM. Associates with the elongator complex and is required for tRNA Wobble base modifications mediated by the elongator complex. The elongator complex is required for multiple tRNA modifications, including mcm5U (5-methoxycarbonylmethyl uridine), mcm5s 2U (5-methoxycarbonylmethyl-2-thiouridine), and ncm5U (5-carbamoylmethyl uridine).</text>
</comment>
<comment type="catalytic activity">
    <reaction evidence="2">
        <text>[3Fe-4S](1+)-[protein] + Fe(2+)-[Dph3] = [3Fe-4S](0)-[protein] + Fe(3+)-[Dph3]</text>
        <dbReference type="Rhea" id="RHEA:71235"/>
        <dbReference type="Rhea" id="RHEA-COMP:17996"/>
        <dbReference type="Rhea" id="RHEA-COMP:17997"/>
        <dbReference type="Rhea" id="RHEA-COMP:18002"/>
        <dbReference type="Rhea" id="RHEA-COMP:18003"/>
        <dbReference type="ChEBI" id="CHEBI:29033"/>
        <dbReference type="ChEBI" id="CHEBI:29034"/>
        <dbReference type="ChEBI" id="CHEBI:33751"/>
        <dbReference type="ChEBI" id="CHEBI:47402"/>
        <dbReference type="ChEBI" id="CHEBI:83228"/>
    </reaction>
</comment>
<comment type="catalytic activity">
    <reaction evidence="2">
        <text>2 [3Fe-4S](0)-[protein] + 2 Fe(2+)-[Dph3] + NADH = 2 [4Fe-4S](1+)-[protein] + 2 [Dph3] + NAD(+) + H(+)</text>
        <dbReference type="Rhea" id="RHEA:71239"/>
        <dbReference type="Rhea" id="RHEA-COMP:17997"/>
        <dbReference type="Rhea" id="RHEA-COMP:17998"/>
        <dbReference type="Rhea" id="RHEA-COMP:18001"/>
        <dbReference type="Rhea" id="RHEA-COMP:18002"/>
        <dbReference type="ChEBI" id="CHEBI:15378"/>
        <dbReference type="ChEBI" id="CHEBI:29033"/>
        <dbReference type="ChEBI" id="CHEBI:33723"/>
        <dbReference type="ChEBI" id="CHEBI:47402"/>
        <dbReference type="ChEBI" id="CHEBI:57540"/>
        <dbReference type="ChEBI" id="CHEBI:57945"/>
        <dbReference type="ChEBI" id="CHEBI:83228"/>
    </reaction>
</comment>
<comment type="cofactor">
    <cofactor evidence="2">
        <name>Fe(2+)</name>
        <dbReference type="ChEBI" id="CHEBI:29033"/>
    </cofactor>
</comment>
<comment type="pathway">
    <text evidence="2">Protein modification; peptidyl-diphthamide biosynthesis.</text>
</comment>
<comment type="subunit">
    <text evidence="2">Component of the 2-(3-amino-3-carboxypropyl)histidine synthase complex composed of dph1, dph2, dph3 and a NADH-dependent reductase, predominantly cbr1.</text>
</comment>
<comment type="subcellular location">
    <subcellularLocation>
        <location evidence="1">Cytoplasm</location>
    </subcellularLocation>
    <subcellularLocation>
        <location evidence="1">Nucleus</location>
    </subcellularLocation>
</comment>
<comment type="domain">
    <text evidence="2">The DPH-type metal-binding (MB) domain can also bind zinc. However, iron is the physiological binding partner as zinc binding impairs the protein electron donor function.</text>
</comment>
<comment type="similarity">
    <text evidence="4">Belongs to the DPH3 family.</text>
</comment>
<reference key="1">
    <citation type="journal article" date="2005" name="Nature">
        <title>Genomic sequence of the pathogenic and allergenic filamentous fungus Aspergillus fumigatus.</title>
        <authorList>
            <person name="Nierman W.C."/>
            <person name="Pain A."/>
            <person name="Anderson M.J."/>
            <person name="Wortman J.R."/>
            <person name="Kim H.S."/>
            <person name="Arroyo J."/>
            <person name="Berriman M."/>
            <person name="Abe K."/>
            <person name="Archer D.B."/>
            <person name="Bermejo C."/>
            <person name="Bennett J.W."/>
            <person name="Bowyer P."/>
            <person name="Chen D."/>
            <person name="Collins M."/>
            <person name="Coulsen R."/>
            <person name="Davies R."/>
            <person name="Dyer P.S."/>
            <person name="Farman M.L."/>
            <person name="Fedorova N."/>
            <person name="Fedorova N.D."/>
            <person name="Feldblyum T.V."/>
            <person name="Fischer R."/>
            <person name="Fosker N."/>
            <person name="Fraser A."/>
            <person name="Garcia J.L."/>
            <person name="Garcia M.J."/>
            <person name="Goble A."/>
            <person name="Goldman G.H."/>
            <person name="Gomi K."/>
            <person name="Griffith-Jones S."/>
            <person name="Gwilliam R."/>
            <person name="Haas B.J."/>
            <person name="Haas H."/>
            <person name="Harris D.E."/>
            <person name="Horiuchi H."/>
            <person name="Huang J."/>
            <person name="Humphray S."/>
            <person name="Jimenez J."/>
            <person name="Keller N."/>
            <person name="Khouri H."/>
            <person name="Kitamoto K."/>
            <person name="Kobayashi T."/>
            <person name="Konzack S."/>
            <person name="Kulkarni R."/>
            <person name="Kumagai T."/>
            <person name="Lafton A."/>
            <person name="Latge J.-P."/>
            <person name="Li W."/>
            <person name="Lord A."/>
            <person name="Lu C."/>
            <person name="Majoros W.H."/>
            <person name="May G.S."/>
            <person name="Miller B.L."/>
            <person name="Mohamoud Y."/>
            <person name="Molina M."/>
            <person name="Monod M."/>
            <person name="Mouyna I."/>
            <person name="Mulligan S."/>
            <person name="Murphy L.D."/>
            <person name="O'Neil S."/>
            <person name="Paulsen I."/>
            <person name="Penalva M.A."/>
            <person name="Pertea M."/>
            <person name="Price C."/>
            <person name="Pritchard B.L."/>
            <person name="Quail M.A."/>
            <person name="Rabbinowitsch E."/>
            <person name="Rawlins N."/>
            <person name="Rajandream M.A."/>
            <person name="Reichard U."/>
            <person name="Renauld H."/>
            <person name="Robson G.D."/>
            <person name="Rodriguez de Cordoba S."/>
            <person name="Rodriguez-Pena J.M."/>
            <person name="Ronning C.M."/>
            <person name="Rutter S."/>
            <person name="Salzberg S.L."/>
            <person name="Sanchez M."/>
            <person name="Sanchez-Ferrero J.C."/>
            <person name="Saunders D."/>
            <person name="Seeger K."/>
            <person name="Squares R."/>
            <person name="Squares S."/>
            <person name="Takeuchi M."/>
            <person name="Tekaia F."/>
            <person name="Turner G."/>
            <person name="Vazquez de Aldana C.R."/>
            <person name="Weidman J."/>
            <person name="White O."/>
            <person name="Woodward J.R."/>
            <person name="Yu J.-H."/>
            <person name="Fraser C.M."/>
            <person name="Galagan J.E."/>
            <person name="Asai K."/>
            <person name="Machida M."/>
            <person name="Hall N."/>
            <person name="Barrell B.G."/>
            <person name="Denning D.W."/>
        </authorList>
    </citation>
    <scope>NUCLEOTIDE SEQUENCE [LARGE SCALE GENOMIC DNA]</scope>
    <source>
        <strain>ATCC MYA-4609 / CBS 101355 / FGSC A1100 / Af293</strain>
    </source>
</reference>